<evidence type="ECO:0000250" key="1"/>
<evidence type="ECO:0000250" key="2">
    <source>
        <dbReference type="UniProtKB" id="A8HN58"/>
    </source>
</evidence>
<evidence type="ECO:0000250" key="3">
    <source>
        <dbReference type="UniProtKB" id="Q9D0P8"/>
    </source>
</evidence>
<evidence type="ECO:0000305" key="4"/>
<gene>
    <name type="primary">IFT27</name>
    <name type="synonym">RABL4</name>
    <name type="synonym">RAYL</name>
</gene>
<keyword id="KW-0966">Cell projection</keyword>
<keyword id="KW-0969">Cilium</keyword>
<keyword id="KW-0963">Cytoplasm</keyword>
<keyword id="KW-0221">Differentiation</keyword>
<keyword id="KW-0282">Flagellum</keyword>
<keyword id="KW-0342">GTP-binding</keyword>
<keyword id="KW-0547">Nucleotide-binding</keyword>
<keyword id="KW-0653">Protein transport</keyword>
<keyword id="KW-1185">Reference proteome</keyword>
<keyword id="KW-0744">Spermatogenesis</keyword>
<keyword id="KW-0813">Transport</keyword>
<reference key="1">
    <citation type="submission" date="2007-06" db="EMBL/GenBank/DDBJ databases">
        <authorList>
            <consortium name="NIH - Mammalian Gene Collection (MGC) project"/>
        </authorList>
    </citation>
    <scope>NUCLEOTIDE SEQUENCE [LARGE SCALE MRNA]</scope>
    <source>
        <strain>Hereford</strain>
        <tissue>Fetal brain</tissue>
        <tissue>Fetal cerebellum</tissue>
    </source>
</reference>
<name>IFT27_BOVIN</name>
<accession>Q0VCN3</accession>
<accession>A6H6X3</accession>
<organism>
    <name type="scientific">Bos taurus</name>
    <name type="common">Bovine</name>
    <dbReference type="NCBI Taxonomy" id="9913"/>
    <lineage>
        <taxon>Eukaryota</taxon>
        <taxon>Metazoa</taxon>
        <taxon>Chordata</taxon>
        <taxon>Craniata</taxon>
        <taxon>Vertebrata</taxon>
        <taxon>Euteleostomi</taxon>
        <taxon>Mammalia</taxon>
        <taxon>Eutheria</taxon>
        <taxon>Laurasiatheria</taxon>
        <taxon>Artiodactyla</taxon>
        <taxon>Ruminantia</taxon>
        <taxon>Pecora</taxon>
        <taxon>Bovidae</taxon>
        <taxon>Bovinae</taxon>
        <taxon>Bos</taxon>
    </lineage>
</organism>
<dbReference type="EMBL" id="BC120086">
    <property type="protein sequence ID" value="AAI20087.1"/>
    <property type="molecule type" value="mRNA"/>
</dbReference>
<dbReference type="EMBL" id="BC146031">
    <property type="protein sequence ID" value="AAI46032.1"/>
    <property type="molecule type" value="mRNA"/>
</dbReference>
<dbReference type="RefSeq" id="NP_001069913.1">
    <property type="nucleotide sequence ID" value="NM_001076445.1"/>
</dbReference>
<dbReference type="SMR" id="Q0VCN3"/>
<dbReference type="FunCoup" id="Q0VCN3">
    <property type="interactions" value="3570"/>
</dbReference>
<dbReference type="STRING" id="9913.ENSBTAP00000037810"/>
<dbReference type="PaxDb" id="9913-ENSBTAP00000037810"/>
<dbReference type="GeneID" id="617147"/>
<dbReference type="KEGG" id="bta:617147"/>
<dbReference type="CTD" id="11020"/>
<dbReference type="VEuPathDB" id="HostDB:ENSBTAG00000026657"/>
<dbReference type="eggNOG" id="KOG0079">
    <property type="taxonomic scope" value="Eukaryota"/>
</dbReference>
<dbReference type="HOGENOM" id="CLU_041217_10_6_1"/>
<dbReference type="InParanoid" id="Q0VCN3"/>
<dbReference type="OMA" id="KMWGQPS"/>
<dbReference type="OrthoDB" id="265044at2759"/>
<dbReference type="TreeFam" id="TF329292"/>
<dbReference type="Reactome" id="R-BTA-5620924">
    <property type="pathway name" value="Intraflagellar transport"/>
</dbReference>
<dbReference type="Proteomes" id="UP000009136">
    <property type="component" value="Chromosome 5"/>
</dbReference>
<dbReference type="Bgee" id="ENSBTAG00000026657">
    <property type="expression patterns" value="Expressed in olfactory segment of nasal mucosa and 106 other cell types or tissues"/>
</dbReference>
<dbReference type="GO" id="GO:0005929">
    <property type="term" value="C:cilium"/>
    <property type="evidence" value="ECO:0000250"/>
    <property type="project" value="UniProtKB"/>
</dbReference>
<dbReference type="GO" id="GO:0005737">
    <property type="term" value="C:cytoplasm"/>
    <property type="evidence" value="ECO:0000250"/>
    <property type="project" value="UniProtKB"/>
</dbReference>
<dbReference type="GO" id="GO:0005794">
    <property type="term" value="C:Golgi apparatus"/>
    <property type="evidence" value="ECO:0000318"/>
    <property type="project" value="GO_Central"/>
</dbReference>
<dbReference type="GO" id="GO:0000139">
    <property type="term" value="C:Golgi membrane"/>
    <property type="evidence" value="ECO:0000318"/>
    <property type="project" value="GO_Central"/>
</dbReference>
<dbReference type="GO" id="GO:0030992">
    <property type="term" value="C:intraciliary transport particle B"/>
    <property type="evidence" value="ECO:0000250"/>
    <property type="project" value="UniProtKB"/>
</dbReference>
<dbReference type="GO" id="GO:0036126">
    <property type="term" value="C:sperm flagellum"/>
    <property type="evidence" value="ECO:0000250"/>
    <property type="project" value="UniProtKB"/>
</dbReference>
<dbReference type="GO" id="GO:0005525">
    <property type="term" value="F:GTP binding"/>
    <property type="evidence" value="ECO:0000318"/>
    <property type="project" value="GO_Central"/>
</dbReference>
<dbReference type="GO" id="GO:0003924">
    <property type="term" value="F:GTPase activity"/>
    <property type="evidence" value="ECO:0000318"/>
    <property type="project" value="GO_Central"/>
</dbReference>
<dbReference type="GO" id="GO:0030154">
    <property type="term" value="P:cell differentiation"/>
    <property type="evidence" value="ECO:0007669"/>
    <property type="project" value="UniProtKB-KW"/>
</dbReference>
<dbReference type="GO" id="GO:0006886">
    <property type="term" value="P:intracellular protein transport"/>
    <property type="evidence" value="ECO:0000250"/>
    <property type="project" value="UniProtKB"/>
</dbReference>
<dbReference type="GO" id="GO:0042073">
    <property type="term" value="P:intraciliary transport"/>
    <property type="evidence" value="ECO:0000250"/>
    <property type="project" value="UniProtKB"/>
</dbReference>
<dbReference type="GO" id="GO:0001822">
    <property type="term" value="P:kidney development"/>
    <property type="evidence" value="ECO:0000250"/>
    <property type="project" value="UniProtKB"/>
</dbReference>
<dbReference type="GO" id="GO:0007224">
    <property type="term" value="P:smoothened signaling pathway"/>
    <property type="evidence" value="ECO:0000250"/>
    <property type="project" value="UniProtKB"/>
</dbReference>
<dbReference type="GO" id="GO:0007283">
    <property type="term" value="P:spermatogenesis"/>
    <property type="evidence" value="ECO:0000250"/>
    <property type="project" value="UniProtKB"/>
</dbReference>
<dbReference type="GO" id="GO:0016192">
    <property type="term" value="P:vesicle-mediated transport"/>
    <property type="evidence" value="ECO:0000318"/>
    <property type="project" value="GO_Central"/>
</dbReference>
<dbReference type="CDD" id="cd04101">
    <property type="entry name" value="RabL4"/>
    <property type="match status" value="1"/>
</dbReference>
<dbReference type="FunFam" id="3.40.50.300:FF:001095">
    <property type="entry name" value="Intraflagellar transport protein 27 homolog"/>
    <property type="match status" value="1"/>
</dbReference>
<dbReference type="Gene3D" id="3.40.50.300">
    <property type="entry name" value="P-loop containing nucleotide triphosphate hydrolases"/>
    <property type="match status" value="1"/>
</dbReference>
<dbReference type="InterPro" id="IPR027417">
    <property type="entry name" value="P-loop_NTPase"/>
</dbReference>
<dbReference type="InterPro" id="IPR050209">
    <property type="entry name" value="Rab_GTPases_membrane_traffic"/>
</dbReference>
<dbReference type="InterPro" id="IPR034112">
    <property type="entry name" value="RabL4_euk"/>
</dbReference>
<dbReference type="InterPro" id="IPR005225">
    <property type="entry name" value="Small_GTP-bd"/>
</dbReference>
<dbReference type="InterPro" id="IPR001806">
    <property type="entry name" value="Small_GTPase"/>
</dbReference>
<dbReference type="NCBIfam" id="TIGR00231">
    <property type="entry name" value="small_GTP"/>
    <property type="match status" value="1"/>
</dbReference>
<dbReference type="PANTHER" id="PTHR47979">
    <property type="entry name" value="DRAB11-RELATED"/>
    <property type="match status" value="1"/>
</dbReference>
<dbReference type="Pfam" id="PF00071">
    <property type="entry name" value="Ras"/>
    <property type="match status" value="1"/>
</dbReference>
<dbReference type="PRINTS" id="PR00449">
    <property type="entry name" value="RASTRNSFRMNG"/>
</dbReference>
<dbReference type="SMART" id="SM00175">
    <property type="entry name" value="RAB"/>
    <property type="match status" value="1"/>
</dbReference>
<dbReference type="SMART" id="SM00173">
    <property type="entry name" value="RAS"/>
    <property type="match status" value="1"/>
</dbReference>
<dbReference type="SMART" id="SM00174">
    <property type="entry name" value="RHO"/>
    <property type="match status" value="1"/>
</dbReference>
<dbReference type="SUPFAM" id="SSF52540">
    <property type="entry name" value="P-loop containing nucleoside triphosphate hydrolases"/>
    <property type="match status" value="1"/>
</dbReference>
<dbReference type="PROSITE" id="PS51419">
    <property type="entry name" value="RAB"/>
    <property type="match status" value="1"/>
</dbReference>
<proteinExistence type="evidence at transcript level"/>
<comment type="function">
    <text evidence="2 3">Small GTPase-like component of the intraflagellar transport (IFT) complex B that promotes the exit of the BBSome complex from cilia via its interaction with ARL6. Not involved in entry of the BBSome complex into cilium. Prevents aggregation of GTP-free ARL6. Required for hedgehog signaling. Forms a subcomplex within the IFT complex B with IFT25. Its role in intraflagellar transport is mainly seen in tissues rich in ciliated cells such as kidney and testis. Essential for male fertility, spermiogenesis and sperm flagella formation. Plays a role in the early development of the kidney. May be involved in the regulation of ureteric bud initiation.</text>
</comment>
<comment type="subunit">
    <text evidence="2 3">Component of the IFT complex B, at least composed of IFT20, IFT22, IFT25, IFT27, IFT46, IFT52, TRAF3IP1/IFT54, IFT57, IFT74, IFT80, IFT81, and IFT88. Interacts with IFT25. Interacts with IFT70B (By similarity). Interacts with RABL2/RABL2A; binding is equal in the presence of GTP or GDP. Interacts with IFT88. Interacts with ARL6; recognizes and binds with the GTP-free form of ARL6.</text>
</comment>
<comment type="subcellular location">
    <subcellularLocation>
        <location evidence="3">Cell projection</location>
        <location evidence="3">Cilium</location>
    </subcellularLocation>
    <subcellularLocation>
        <location evidence="3">Cytoplasm</location>
    </subcellularLocation>
    <subcellularLocation>
        <location evidence="3">Cell projection</location>
        <location evidence="3">Cilium</location>
        <location evidence="3">Flagellum</location>
    </subcellularLocation>
    <text evidence="3">Localizes to the sperm flagellum.</text>
</comment>
<comment type="similarity">
    <text evidence="4">Belongs to the small GTPase superfamily. Rab family.</text>
</comment>
<sequence length="186" mass="20646">MVKLAAKCILAGDPTVGKTALAQLFRSDGAHFQKNYTLTTGVDLVVKTVPVPDTGDSVELFIFDSAGKELFSEMLDKLWESPNVLCLVYDVTNEQSFTNCSKWLEKARSQIPGTTLPGVLVGNKTDLAGRRVVDVAQAQAWALGQGLECFETSVKEMENYEAPFHYLAKQFHHLYREKLEVFQALV</sequence>
<protein>
    <recommendedName>
        <fullName>Intraflagellar transport protein 27 homolog</fullName>
        <shortName>IFT27</shortName>
    </recommendedName>
    <alternativeName>
        <fullName>Putative GTP-binding protein RAY-like</fullName>
    </alternativeName>
    <alternativeName>
        <fullName>Rab-like protein 4</fullName>
    </alternativeName>
</protein>
<feature type="chain" id="PRO_0000283072" description="Intraflagellar transport protein 27 homolog">
    <location>
        <begin position="1"/>
        <end position="186"/>
    </location>
</feature>
<feature type="binding site" evidence="1">
    <location>
        <begin position="12"/>
        <end position="19"/>
    </location>
    <ligand>
        <name>GTP</name>
        <dbReference type="ChEBI" id="CHEBI:37565"/>
    </ligand>
</feature>
<feature type="binding site" evidence="1">
    <location>
        <begin position="64"/>
        <end position="68"/>
    </location>
    <ligand>
        <name>GTP</name>
        <dbReference type="ChEBI" id="CHEBI:37565"/>
    </ligand>
</feature>
<feature type="binding site" evidence="1">
    <location>
        <begin position="123"/>
        <end position="126"/>
    </location>
    <ligand>
        <name>GTP</name>
        <dbReference type="ChEBI" id="CHEBI:37565"/>
    </ligand>
</feature>